<name>CARA_CHAGB</name>
<feature type="chain" id="PRO_0000290592" description="Carbamoyl phosphate synthase arginine-specific small chain">
    <location>
        <begin position="1"/>
        <end position="461"/>
    </location>
</feature>
<feature type="domain" description="Glutamine amidotransferase type-1" evidence="2">
    <location>
        <begin position="240"/>
        <end position="427"/>
    </location>
</feature>
<feature type="active site" description="Nucleophile" evidence="2">
    <location>
        <position position="316"/>
    </location>
</feature>
<feature type="active site" evidence="2">
    <location>
        <position position="400"/>
    </location>
</feature>
<feature type="active site" evidence="2">
    <location>
        <position position="402"/>
    </location>
</feature>
<gene>
    <name type="primary">CPA1</name>
    <name type="ORF">CHGG_04514</name>
</gene>
<organism>
    <name type="scientific">Chaetomium globosum (strain ATCC 6205 / CBS 148.51 / DSM 1962 / NBRC 6347 / NRRL 1970)</name>
    <name type="common">Soil fungus</name>
    <dbReference type="NCBI Taxonomy" id="306901"/>
    <lineage>
        <taxon>Eukaryota</taxon>
        <taxon>Fungi</taxon>
        <taxon>Dikarya</taxon>
        <taxon>Ascomycota</taxon>
        <taxon>Pezizomycotina</taxon>
        <taxon>Sordariomycetes</taxon>
        <taxon>Sordariomycetidae</taxon>
        <taxon>Sordariales</taxon>
        <taxon>Chaetomiaceae</taxon>
        <taxon>Chaetomium</taxon>
    </lineage>
</organism>
<keyword id="KW-0028">Amino-acid biosynthesis</keyword>
<keyword id="KW-0055">Arginine biosynthesis</keyword>
<keyword id="KW-0067">ATP-binding</keyword>
<keyword id="KW-0963">Cytoplasm</keyword>
<keyword id="KW-0315">Glutamine amidotransferase</keyword>
<keyword id="KW-0436">Ligase</keyword>
<keyword id="KW-0547">Nucleotide-binding</keyword>
<keyword id="KW-1185">Reference proteome</keyword>
<accession>Q2H132</accession>
<dbReference type="EC" id="6.3.5.5" evidence="1"/>
<dbReference type="EMBL" id="CH408032">
    <property type="protein sequence ID" value="EAQ87895.1"/>
    <property type="molecule type" value="Genomic_DNA"/>
</dbReference>
<dbReference type="RefSeq" id="XP_001223728.1">
    <property type="nucleotide sequence ID" value="XM_001223727.1"/>
</dbReference>
<dbReference type="SMR" id="Q2H132"/>
<dbReference type="FunCoup" id="Q2H132">
    <property type="interactions" value="322"/>
</dbReference>
<dbReference type="STRING" id="306901.Q2H132"/>
<dbReference type="GeneID" id="4392718"/>
<dbReference type="VEuPathDB" id="FungiDB:CHGG_04514"/>
<dbReference type="eggNOG" id="KOG0370">
    <property type="taxonomic scope" value="Eukaryota"/>
</dbReference>
<dbReference type="HOGENOM" id="CLU_035901_1_0_1"/>
<dbReference type="InParanoid" id="Q2H132"/>
<dbReference type="OMA" id="CFSVQYH"/>
<dbReference type="OrthoDB" id="434at2759"/>
<dbReference type="UniPathway" id="UPA00068">
    <property type="reaction ID" value="UER00171"/>
</dbReference>
<dbReference type="Proteomes" id="UP000001056">
    <property type="component" value="Unassembled WGS sequence"/>
</dbReference>
<dbReference type="GO" id="GO:0005951">
    <property type="term" value="C:carbamoyl-phosphate synthase complex"/>
    <property type="evidence" value="ECO:0007669"/>
    <property type="project" value="EnsemblFungi"/>
</dbReference>
<dbReference type="GO" id="GO:0005524">
    <property type="term" value="F:ATP binding"/>
    <property type="evidence" value="ECO:0007669"/>
    <property type="project" value="UniProtKB-KW"/>
</dbReference>
<dbReference type="GO" id="GO:0004088">
    <property type="term" value="F:carbamoyl-phosphate synthase (glutamine-hydrolyzing) activity"/>
    <property type="evidence" value="ECO:0007669"/>
    <property type="project" value="UniProtKB-EC"/>
</dbReference>
<dbReference type="GO" id="GO:0004359">
    <property type="term" value="F:glutaminase activity"/>
    <property type="evidence" value="ECO:0007669"/>
    <property type="project" value="RHEA"/>
</dbReference>
<dbReference type="GO" id="GO:0006207">
    <property type="term" value="P:'de novo' pyrimidine nucleobase biosynthetic process"/>
    <property type="evidence" value="ECO:0007669"/>
    <property type="project" value="InterPro"/>
</dbReference>
<dbReference type="GO" id="GO:0006541">
    <property type="term" value="P:glutamine metabolic process"/>
    <property type="evidence" value="ECO:0007669"/>
    <property type="project" value="InterPro"/>
</dbReference>
<dbReference type="GO" id="GO:0006526">
    <property type="term" value="P:L-arginine biosynthetic process"/>
    <property type="evidence" value="ECO:0007669"/>
    <property type="project" value="UniProtKB-UniPathway"/>
</dbReference>
<dbReference type="GO" id="GO:0006221">
    <property type="term" value="P:pyrimidine nucleotide biosynthetic process"/>
    <property type="evidence" value="ECO:0007669"/>
    <property type="project" value="EnsemblFungi"/>
</dbReference>
<dbReference type="CDD" id="cd01744">
    <property type="entry name" value="GATase1_CPSase"/>
    <property type="match status" value="1"/>
</dbReference>
<dbReference type="FunFam" id="3.40.50.880:FF:000016">
    <property type="entry name" value="Carbamoyl-phosphate synthase arginine-specific small chain"/>
    <property type="match status" value="1"/>
</dbReference>
<dbReference type="FunFam" id="3.50.30.20:FF:000003">
    <property type="entry name" value="Carbamoyl-phosphate synthase arginine-specific small chain"/>
    <property type="match status" value="1"/>
</dbReference>
<dbReference type="Gene3D" id="3.40.50.880">
    <property type="match status" value="1"/>
</dbReference>
<dbReference type="Gene3D" id="3.50.30.20">
    <property type="entry name" value="Carbamoyl-phosphate synthase small subunit, N-terminal domain"/>
    <property type="match status" value="1"/>
</dbReference>
<dbReference type="HAMAP" id="MF_01209">
    <property type="entry name" value="CPSase_S_chain"/>
    <property type="match status" value="1"/>
</dbReference>
<dbReference type="InterPro" id="IPR006274">
    <property type="entry name" value="CarbamoylP_synth_ssu"/>
</dbReference>
<dbReference type="InterPro" id="IPR002474">
    <property type="entry name" value="CarbamoylP_synth_ssu_N"/>
</dbReference>
<dbReference type="InterPro" id="IPR036480">
    <property type="entry name" value="CarbP_synth_ssu_N_sf"/>
</dbReference>
<dbReference type="InterPro" id="IPR029062">
    <property type="entry name" value="Class_I_gatase-like"/>
</dbReference>
<dbReference type="InterPro" id="IPR035686">
    <property type="entry name" value="CPSase_GATase1"/>
</dbReference>
<dbReference type="InterPro" id="IPR017926">
    <property type="entry name" value="GATASE"/>
</dbReference>
<dbReference type="NCBIfam" id="TIGR01368">
    <property type="entry name" value="CPSaseIIsmall"/>
    <property type="match status" value="1"/>
</dbReference>
<dbReference type="NCBIfam" id="NF009475">
    <property type="entry name" value="PRK12838.1"/>
    <property type="match status" value="1"/>
</dbReference>
<dbReference type="PANTHER" id="PTHR11405:SF4">
    <property type="entry name" value="CARBAMOYL-PHOSPHATE SYNTHASE ARGININE-SPECIFIC SMALL CHAIN"/>
    <property type="match status" value="1"/>
</dbReference>
<dbReference type="PANTHER" id="PTHR11405">
    <property type="entry name" value="CARBAMOYLTRANSFERASE FAMILY MEMBER"/>
    <property type="match status" value="1"/>
</dbReference>
<dbReference type="Pfam" id="PF00988">
    <property type="entry name" value="CPSase_sm_chain"/>
    <property type="match status" value="1"/>
</dbReference>
<dbReference type="Pfam" id="PF00117">
    <property type="entry name" value="GATase"/>
    <property type="match status" value="1"/>
</dbReference>
<dbReference type="PRINTS" id="PR00097">
    <property type="entry name" value="ANTSNTHASEII"/>
</dbReference>
<dbReference type="PRINTS" id="PR00099">
    <property type="entry name" value="CPSGATASE"/>
</dbReference>
<dbReference type="PRINTS" id="PR00096">
    <property type="entry name" value="GATASE"/>
</dbReference>
<dbReference type="SMART" id="SM01097">
    <property type="entry name" value="CPSase_sm_chain"/>
    <property type="match status" value="1"/>
</dbReference>
<dbReference type="SUPFAM" id="SSF52021">
    <property type="entry name" value="Carbamoyl phosphate synthetase, small subunit N-terminal domain"/>
    <property type="match status" value="1"/>
</dbReference>
<dbReference type="SUPFAM" id="SSF52317">
    <property type="entry name" value="Class I glutamine amidotransferase-like"/>
    <property type="match status" value="1"/>
</dbReference>
<dbReference type="PROSITE" id="PS51273">
    <property type="entry name" value="GATASE_TYPE_1"/>
    <property type="match status" value="1"/>
</dbReference>
<reference key="1">
    <citation type="journal article" date="2015" name="Genome Announc.">
        <title>Draft genome sequence of the cellulolytic fungus Chaetomium globosum.</title>
        <authorList>
            <person name="Cuomo C.A."/>
            <person name="Untereiner W.A."/>
            <person name="Ma L.-J."/>
            <person name="Grabherr M."/>
            <person name="Birren B.W."/>
        </authorList>
    </citation>
    <scope>NUCLEOTIDE SEQUENCE [LARGE SCALE GENOMIC DNA]</scope>
    <source>
        <strain>ATCC 6205 / CBS 148.51 / DSM 1962 / NBRC 6347 / NRRL 1970</strain>
    </source>
</reference>
<sequence>MSFFFSRQSDISFLLFSESTSTTRNSSQARLLSRLAVDGSKGRAMPVLNTTRATAAASGVDATLTIRDGPVFHGTAFGANSNISGEAVFTTSLVGYPESMTDPSYRGQILVFTQPLIGNYGVPSNQRDEYGLLKYFESPHIQCAGVVVADVAEKYSHWTAVESLSEWCAREGVPVISGVDTRAIVTHLREQGSSLARISIGDEYDADEDEGFIDPGAINLVKRVSTKAPFVVSNPNATFHVALIDCGVKENILRSLVSRGASVTVFPYNYPIHKVADNFDGVFISNGPGDPTHCQETVYNLGRLMETSSVPIMGICLGHQLLALAVGAQTIKLKYGNRAHNIPALDLTTGQCHITSQNHGYAVDASTLPSEFKEYFVNLNDGSNEGMMHKTRPIFSTQFHPEAKGGPMDSSYLFDKYLENVQMYKDNSKVYRDNRPSQLMIDILSKERVGVEPSPLAANAI</sequence>
<proteinExistence type="inferred from homology"/>
<protein>
    <recommendedName>
        <fullName>Carbamoyl phosphate synthase arginine-specific small chain</fullName>
        <shortName>CPS</shortName>
        <shortName>CPSase</shortName>
        <ecNumber evidence="1">6.3.5.5</ecNumber>
    </recommendedName>
    <alternativeName>
        <fullName>Arginine-specific carbamoyl phosphate synthetase, glutamine chain</fullName>
    </alternativeName>
    <alternativeName>
        <fullName>Glutamine-dependent carbamoyl phosphate synthetase</fullName>
    </alternativeName>
</protein>
<comment type="function">
    <text evidence="1">Small subunit of the arginine-specific carbamoyl phosphate synthase (CPSase). CPSase catalyzes the formation of carbamoyl phosphate from the ammonia moiety of glutamine, carbonate, and phosphate donated by ATP, constituting the first step of 2 biosynthetic pathways, one leading to arginine and/or urea and the other to pyrimidine nucleotides. The small subunit (glutamine amidotransferase) binds and cleaves glutamine to supply the large subunit with the substrate ammonia.</text>
</comment>
<comment type="catalytic activity">
    <reaction evidence="1">
        <text>hydrogencarbonate + L-glutamine + 2 ATP + H2O = carbamoyl phosphate + L-glutamate + 2 ADP + phosphate + 2 H(+)</text>
        <dbReference type="Rhea" id="RHEA:18633"/>
        <dbReference type="ChEBI" id="CHEBI:15377"/>
        <dbReference type="ChEBI" id="CHEBI:15378"/>
        <dbReference type="ChEBI" id="CHEBI:17544"/>
        <dbReference type="ChEBI" id="CHEBI:29985"/>
        <dbReference type="ChEBI" id="CHEBI:30616"/>
        <dbReference type="ChEBI" id="CHEBI:43474"/>
        <dbReference type="ChEBI" id="CHEBI:58228"/>
        <dbReference type="ChEBI" id="CHEBI:58359"/>
        <dbReference type="ChEBI" id="CHEBI:456216"/>
        <dbReference type="EC" id="6.3.5.5"/>
    </reaction>
</comment>
<comment type="catalytic activity">
    <molecule>Carbamoyl phosphate synthase arginine-specific small chain</molecule>
    <reaction evidence="1">
        <text>L-glutamine + H2O = L-glutamate + NH4(+)</text>
        <dbReference type="Rhea" id="RHEA:15889"/>
        <dbReference type="ChEBI" id="CHEBI:15377"/>
        <dbReference type="ChEBI" id="CHEBI:28938"/>
        <dbReference type="ChEBI" id="CHEBI:29985"/>
        <dbReference type="ChEBI" id="CHEBI:58359"/>
    </reaction>
</comment>
<comment type="pathway">
    <text evidence="1">Amino-acid biosynthesis; L-arginine biosynthesis; carbamoyl phosphate from bicarbonate: step 1/1.</text>
</comment>
<comment type="subunit">
    <text evidence="1">Heterodimer composed of 2 chains; the small (or glutamine) chain promotes the hydrolysis of glutamine to ammonia, which is used by the large (or ammonia) chain to synthesize carbamoyl phosphate.</text>
</comment>
<comment type="subcellular location">
    <subcellularLocation>
        <location evidence="1">Cytoplasm</location>
    </subcellularLocation>
</comment>
<comment type="similarity">
    <text evidence="3">Belongs to the CarA family.</text>
</comment>
<evidence type="ECO:0000250" key="1">
    <source>
        <dbReference type="UniProtKB" id="P07258"/>
    </source>
</evidence>
<evidence type="ECO:0000255" key="2">
    <source>
        <dbReference type="PROSITE-ProRule" id="PRU00605"/>
    </source>
</evidence>
<evidence type="ECO:0000305" key="3"/>